<dbReference type="EMBL" id="CP001124">
    <property type="protein sequence ID" value="ACH40027.1"/>
    <property type="molecule type" value="Genomic_DNA"/>
</dbReference>
<dbReference type="RefSeq" id="WP_012531458.1">
    <property type="nucleotide sequence ID" value="NC_011146.1"/>
</dbReference>
<dbReference type="SMR" id="B5E858"/>
<dbReference type="STRING" id="404380.Gbem_3025"/>
<dbReference type="KEGG" id="gbm:Gbem_3025"/>
<dbReference type="eggNOG" id="COG1327">
    <property type="taxonomic scope" value="Bacteria"/>
</dbReference>
<dbReference type="HOGENOM" id="CLU_108412_0_0_7"/>
<dbReference type="OrthoDB" id="9807461at2"/>
<dbReference type="Proteomes" id="UP000008825">
    <property type="component" value="Chromosome"/>
</dbReference>
<dbReference type="GO" id="GO:0005524">
    <property type="term" value="F:ATP binding"/>
    <property type="evidence" value="ECO:0007669"/>
    <property type="project" value="UniProtKB-KW"/>
</dbReference>
<dbReference type="GO" id="GO:0003677">
    <property type="term" value="F:DNA binding"/>
    <property type="evidence" value="ECO:0007669"/>
    <property type="project" value="UniProtKB-KW"/>
</dbReference>
<dbReference type="GO" id="GO:0008270">
    <property type="term" value="F:zinc ion binding"/>
    <property type="evidence" value="ECO:0007669"/>
    <property type="project" value="UniProtKB-UniRule"/>
</dbReference>
<dbReference type="GO" id="GO:0045892">
    <property type="term" value="P:negative regulation of DNA-templated transcription"/>
    <property type="evidence" value="ECO:0007669"/>
    <property type="project" value="UniProtKB-UniRule"/>
</dbReference>
<dbReference type="HAMAP" id="MF_00440">
    <property type="entry name" value="NrdR"/>
    <property type="match status" value="1"/>
</dbReference>
<dbReference type="InterPro" id="IPR005144">
    <property type="entry name" value="ATP-cone_dom"/>
</dbReference>
<dbReference type="InterPro" id="IPR055173">
    <property type="entry name" value="NrdR-like_N"/>
</dbReference>
<dbReference type="InterPro" id="IPR003796">
    <property type="entry name" value="RNR_NrdR-like"/>
</dbReference>
<dbReference type="NCBIfam" id="TIGR00244">
    <property type="entry name" value="transcriptional regulator NrdR"/>
    <property type="match status" value="1"/>
</dbReference>
<dbReference type="PANTHER" id="PTHR30455">
    <property type="entry name" value="TRANSCRIPTIONAL REPRESSOR NRDR"/>
    <property type="match status" value="1"/>
</dbReference>
<dbReference type="PANTHER" id="PTHR30455:SF2">
    <property type="entry name" value="TRANSCRIPTIONAL REPRESSOR NRDR"/>
    <property type="match status" value="1"/>
</dbReference>
<dbReference type="Pfam" id="PF03477">
    <property type="entry name" value="ATP-cone"/>
    <property type="match status" value="1"/>
</dbReference>
<dbReference type="Pfam" id="PF22811">
    <property type="entry name" value="Zn_ribbon_NrdR"/>
    <property type="match status" value="1"/>
</dbReference>
<dbReference type="PROSITE" id="PS51161">
    <property type="entry name" value="ATP_CONE"/>
    <property type="match status" value="1"/>
</dbReference>
<proteinExistence type="inferred from homology"/>
<reference key="1">
    <citation type="submission" date="2008-07" db="EMBL/GenBank/DDBJ databases">
        <title>Complete sequence of Geobacter bemidjiensis BEM.</title>
        <authorList>
            <consortium name="US DOE Joint Genome Institute"/>
            <person name="Lucas S."/>
            <person name="Copeland A."/>
            <person name="Lapidus A."/>
            <person name="Glavina del Rio T."/>
            <person name="Dalin E."/>
            <person name="Tice H."/>
            <person name="Bruce D."/>
            <person name="Goodwin L."/>
            <person name="Pitluck S."/>
            <person name="Kiss H."/>
            <person name="Brettin T."/>
            <person name="Detter J.C."/>
            <person name="Han C."/>
            <person name="Kuske C.R."/>
            <person name="Schmutz J."/>
            <person name="Larimer F."/>
            <person name="Land M."/>
            <person name="Hauser L."/>
            <person name="Kyrpides N."/>
            <person name="Lykidis A."/>
            <person name="Lovley D."/>
            <person name="Richardson P."/>
        </authorList>
    </citation>
    <scope>NUCLEOTIDE SEQUENCE [LARGE SCALE GENOMIC DNA]</scope>
    <source>
        <strain>ATCC BAA-1014 / DSM 16622 / JCM 12645 / Bem</strain>
    </source>
</reference>
<sequence>MKCPFCNFSDSKVVDSRPDKGGAAIRRRRECESCGKRFTTHERVEEVLPLVTKRDGRREPFERMKLVNGIQKACEKRPVSVETIEKMVDRLETRLQESGEREIPTTTLGEWIMSELHGVDQVAYVRFASVYRSFKDINEFMEELQDLLKK</sequence>
<keyword id="KW-0067">ATP-binding</keyword>
<keyword id="KW-0238">DNA-binding</keyword>
<keyword id="KW-0479">Metal-binding</keyword>
<keyword id="KW-0547">Nucleotide-binding</keyword>
<keyword id="KW-1185">Reference proteome</keyword>
<keyword id="KW-0678">Repressor</keyword>
<keyword id="KW-0804">Transcription</keyword>
<keyword id="KW-0805">Transcription regulation</keyword>
<keyword id="KW-0862">Zinc</keyword>
<keyword id="KW-0863">Zinc-finger</keyword>
<name>NRDR_CITBB</name>
<gene>
    <name evidence="1" type="primary">nrdR</name>
    <name type="ordered locus">Gbem_3025</name>
</gene>
<feature type="chain" id="PRO_1000124511" description="Transcriptional repressor NrdR">
    <location>
        <begin position="1"/>
        <end position="150"/>
    </location>
</feature>
<feature type="domain" description="ATP-cone" evidence="1">
    <location>
        <begin position="49"/>
        <end position="139"/>
    </location>
</feature>
<feature type="zinc finger region" evidence="1">
    <location>
        <begin position="3"/>
        <end position="34"/>
    </location>
</feature>
<evidence type="ECO:0000255" key="1">
    <source>
        <dbReference type="HAMAP-Rule" id="MF_00440"/>
    </source>
</evidence>
<accession>B5E858</accession>
<comment type="function">
    <text evidence="1">Negatively regulates transcription of bacterial ribonucleotide reductase nrd genes and operons by binding to NrdR-boxes.</text>
</comment>
<comment type="cofactor">
    <cofactor evidence="1">
        <name>Zn(2+)</name>
        <dbReference type="ChEBI" id="CHEBI:29105"/>
    </cofactor>
    <text evidence="1">Binds 1 zinc ion.</text>
</comment>
<comment type="similarity">
    <text evidence="1">Belongs to the NrdR family.</text>
</comment>
<organism>
    <name type="scientific">Citrifermentans bemidjiense (strain ATCC BAA-1014 / DSM 16622 / JCM 12645 / Bem)</name>
    <name type="common">Geobacter bemidjiensis</name>
    <dbReference type="NCBI Taxonomy" id="404380"/>
    <lineage>
        <taxon>Bacteria</taxon>
        <taxon>Pseudomonadati</taxon>
        <taxon>Thermodesulfobacteriota</taxon>
        <taxon>Desulfuromonadia</taxon>
        <taxon>Geobacterales</taxon>
        <taxon>Geobacteraceae</taxon>
        <taxon>Citrifermentans</taxon>
    </lineage>
</organism>
<protein>
    <recommendedName>
        <fullName evidence="1">Transcriptional repressor NrdR</fullName>
    </recommendedName>
</protein>